<proteinExistence type="inferred from homology"/>
<keyword id="KW-0001">2Fe-2S</keyword>
<keyword id="KW-0004">4Fe-4S</keyword>
<keyword id="KW-0963">Cytoplasm</keyword>
<keyword id="KW-0408">Iron</keyword>
<keyword id="KW-0411">Iron-sulfur</keyword>
<keyword id="KW-0479">Metal-binding</keyword>
<keyword id="KW-0496">Mitochondrion</keyword>
<keyword id="KW-1185">Reference proteome</keyword>
<protein>
    <recommendedName>
        <fullName evidence="1">Fe-S cluster assembly protein dre2</fullName>
    </recommendedName>
    <alternativeName>
        <fullName evidence="1">Anamorsin homolog</fullName>
    </alternativeName>
</protein>
<evidence type="ECO:0000255" key="1">
    <source>
        <dbReference type="HAMAP-Rule" id="MF_03115"/>
    </source>
</evidence>
<evidence type="ECO:0000256" key="2">
    <source>
        <dbReference type="SAM" id="MobiDB-lite"/>
    </source>
</evidence>
<name>DRE2_EMENI</name>
<reference key="1">
    <citation type="journal article" date="2005" name="Nature">
        <title>Sequencing of Aspergillus nidulans and comparative analysis with A. fumigatus and A. oryzae.</title>
        <authorList>
            <person name="Galagan J.E."/>
            <person name="Calvo S.E."/>
            <person name="Cuomo C."/>
            <person name="Ma L.-J."/>
            <person name="Wortman J.R."/>
            <person name="Batzoglou S."/>
            <person name="Lee S.-I."/>
            <person name="Bastuerkmen M."/>
            <person name="Spevak C.C."/>
            <person name="Clutterbuck J."/>
            <person name="Kapitonov V."/>
            <person name="Jurka J."/>
            <person name="Scazzocchio C."/>
            <person name="Farman M.L."/>
            <person name="Butler J."/>
            <person name="Purcell S."/>
            <person name="Harris S."/>
            <person name="Braus G.H."/>
            <person name="Draht O."/>
            <person name="Busch S."/>
            <person name="D'Enfert C."/>
            <person name="Bouchier C."/>
            <person name="Goldman G.H."/>
            <person name="Bell-Pedersen D."/>
            <person name="Griffiths-Jones S."/>
            <person name="Doonan J.H."/>
            <person name="Yu J."/>
            <person name="Vienken K."/>
            <person name="Pain A."/>
            <person name="Freitag M."/>
            <person name="Selker E.U."/>
            <person name="Archer D.B."/>
            <person name="Penalva M.A."/>
            <person name="Oakley B.R."/>
            <person name="Momany M."/>
            <person name="Tanaka T."/>
            <person name="Kumagai T."/>
            <person name="Asai K."/>
            <person name="Machida M."/>
            <person name="Nierman W.C."/>
            <person name="Denning D.W."/>
            <person name="Caddick M.X."/>
            <person name="Hynes M."/>
            <person name="Paoletti M."/>
            <person name="Fischer R."/>
            <person name="Miller B.L."/>
            <person name="Dyer P.S."/>
            <person name="Sachs M.S."/>
            <person name="Osmani S.A."/>
            <person name="Birren B.W."/>
        </authorList>
    </citation>
    <scope>NUCLEOTIDE SEQUENCE [LARGE SCALE GENOMIC DNA]</scope>
    <source>
        <strain>FGSC A4 / ATCC 38163 / CBS 112.46 / NRRL 194 / M139</strain>
    </source>
</reference>
<reference key="2">
    <citation type="journal article" date="2009" name="Fungal Genet. Biol.">
        <title>The 2008 update of the Aspergillus nidulans genome annotation: a community effort.</title>
        <authorList>
            <person name="Wortman J.R."/>
            <person name="Gilsenan J.M."/>
            <person name="Joardar V."/>
            <person name="Deegan J."/>
            <person name="Clutterbuck J."/>
            <person name="Andersen M.R."/>
            <person name="Archer D."/>
            <person name="Bencina M."/>
            <person name="Braus G."/>
            <person name="Coutinho P."/>
            <person name="von Dohren H."/>
            <person name="Doonan J."/>
            <person name="Driessen A.J."/>
            <person name="Durek P."/>
            <person name="Espeso E."/>
            <person name="Fekete E."/>
            <person name="Flipphi M."/>
            <person name="Estrada C.G."/>
            <person name="Geysens S."/>
            <person name="Goldman G."/>
            <person name="de Groot P.W."/>
            <person name="Hansen K."/>
            <person name="Harris S.D."/>
            <person name="Heinekamp T."/>
            <person name="Helmstaedt K."/>
            <person name="Henrissat B."/>
            <person name="Hofmann G."/>
            <person name="Homan T."/>
            <person name="Horio T."/>
            <person name="Horiuchi H."/>
            <person name="James S."/>
            <person name="Jones M."/>
            <person name="Karaffa L."/>
            <person name="Karanyi Z."/>
            <person name="Kato M."/>
            <person name="Keller N."/>
            <person name="Kelly D.E."/>
            <person name="Kiel J.A."/>
            <person name="Kim J.M."/>
            <person name="van der Klei I.J."/>
            <person name="Klis F.M."/>
            <person name="Kovalchuk A."/>
            <person name="Krasevec N."/>
            <person name="Kubicek C.P."/>
            <person name="Liu B."/>
            <person name="Maccabe A."/>
            <person name="Meyer V."/>
            <person name="Mirabito P."/>
            <person name="Miskei M."/>
            <person name="Mos M."/>
            <person name="Mullins J."/>
            <person name="Nelson D.R."/>
            <person name="Nielsen J."/>
            <person name="Oakley B.R."/>
            <person name="Osmani S.A."/>
            <person name="Pakula T."/>
            <person name="Paszewski A."/>
            <person name="Paulsen I."/>
            <person name="Pilsyk S."/>
            <person name="Pocsi I."/>
            <person name="Punt P.J."/>
            <person name="Ram A.F."/>
            <person name="Ren Q."/>
            <person name="Robellet X."/>
            <person name="Robson G."/>
            <person name="Seiboth B."/>
            <person name="van Solingen P."/>
            <person name="Specht T."/>
            <person name="Sun J."/>
            <person name="Taheri-Talesh N."/>
            <person name="Takeshita N."/>
            <person name="Ussery D."/>
            <person name="vanKuyk P.A."/>
            <person name="Visser H."/>
            <person name="van de Vondervoort P.J."/>
            <person name="de Vries R.P."/>
            <person name="Walton J."/>
            <person name="Xiang X."/>
            <person name="Xiong Y."/>
            <person name="Zeng A.P."/>
            <person name="Brandt B.W."/>
            <person name="Cornell M.J."/>
            <person name="van den Hondel C.A."/>
            <person name="Visser J."/>
            <person name="Oliver S.G."/>
            <person name="Turner G."/>
        </authorList>
    </citation>
    <scope>GENOME REANNOTATION</scope>
    <source>
        <strain>FGSC A4 / ATCC 38163 / CBS 112.46 / NRRL 194 / M139</strain>
    </source>
</reference>
<gene>
    <name evidence="1" type="primary">dre2</name>
    <name type="ORF">AN8485</name>
</gene>
<feature type="chain" id="PRO_0000324864" description="Fe-S cluster assembly protein dre2">
    <location>
        <begin position="1"/>
        <end position="310"/>
    </location>
</feature>
<feature type="region of interest" description="Disordered" evidence="2">
    <location>
        <begin position="1"/>
        <end position="30"/>
    </location>
</feature>
<feature type="region of interest" description="N-terminal SAM-like domain" evidence="1">
    <location>
        <begin position="24"/>
        <end position="154"/>
    </location>
</feature>
<feature type="region of interest" description="Linker" evidence="1">
    <location>
        <begin position="155"/>
        <end position="202"/>
    </location>
</feature>
<feature type="region of interest" description="Disordered" evidence="2">
    <location>
        <begin position="165"/>
        <end position="184"/>
    </location>
</feature>
<feature type="region of interest" description="Fe-S binding site A" evidence="1">
    <location>
        <begin position="212"/>
        <end position="228"/>
    </location>
</feature>
<feature type="region of interest" description="Fe-S binding site B" evidence="1">
    <location>
        <begin position="273"/>
        <end position="287"/>
    </location>
</feature>
<feature type="short sequence motif" description="Cx2C motif 1" evidence="1">
    <location>
        <begin position="273"/>
        <end position="276"/>
    </location>
</feature>
<feature type="short sequence motif" description="Cx2C motif 2" evidence="1">
    <location>
        <begin position="284"/>
        <end position="287"/>
    </location>
</feature>
<feature type="compositionally biased region" description="Pro residues" evidence="2">
    <location>
        <begin position="167"/>
        <end position="177"/>
    </location>
</feature>
<feature type="binding site" evidence="1">
    <location>
        <position position="212"/>
    </location>
    <ligand>
        <name>[2Fe-2S] cluster</name>
        <dbReference type="ChEBI" id="CHEBI:190135"/>
    </ligand>
</feature>
<feature type="binding site" evidence="1">
    <location>
        <position position="223"/>
    </location>
    <ligand>
        <name>[2Fe-2S] cluster</name>
        <dbReference type="ChEBI" id="CHEBI:190135"/>
    </ligand>
</feature>
<feature type="binding site" evidence="1">
    <location>
        <position position="226"/>
    </location>
    <ligand>
        <name>[2Fe-2S] cluster</name>
        <dbReference type="ChEBI" id="CHEBI:190135"/>
    </ligand>
</feature>
<feature type="binding site" evidence="1">
    <location>
        <position position="228"/>
    </location>
    <ligand>
        <name>[2Fe-2S] cluster</name>
        <dbReference type="ChEBI" id="CHEBI:190135"/>
    </ligand>
</feature>
<feature type="binding site" evidence="1">
    <location>
        <position position="273"/>
    </location>
    <ligand>
        <name>[4Fe-4S] cluster</name>
        <dbReference type="ChEBI" id="CHEBI:49883"/>
    </ligand>
</feature>
<feature type="binding site" evidence="1">
    <location>
        <position position="276"/>
    </location>
    <ligand>
        <name>[4Fe-4S] cluster</name>
        <dbReference type="ChEBI" id="CHEBI:49883"/>
    </ligand>
</feature>
<feature type="binding site" evidence="1">
    <location>
        <position position="284"/>
    </location>
    <ligand>
        <name>[4Fe-4S] cluster</name>
        <dbReference type="ChEBI" id="CHEBI:49883"/>
    </ligand>
</feature>
<feature type="binding site" evidence="1">
    <location>
        <position position="287"/>
    </location>
    <ligand>
        <name>[4Fe-4S] cluster</name>
        <dbReference type="ChEBI" id="CHEBI:49883"/>
    </ligand>
</feature>
<dbReference type="EMBL" id="AACD01000153">
    <property type="protein sequence ID" value="EAA67107.1"/>
    <property type="molecule type" value="Genomic_DNA"/>
</dbReference>
<dbReference type="EMBL" id="BN001305">
    <property type="protein sequence ID" value="CBF80648.1"/>
    <property type="molecule type" value="Genomic_DNA"/>
</dbReference>
<dbReference type="RefSeq" id="XP_681754.1">
    <property type="nucleotide sequence ID" value="XM_676662.1"/>
</dbReference>
<dbReference type="STRING" id="227321.Q5AT95"/>
<dbReference type="EnsemblFungi" id="CBF80648">
    <property type="protein sequence ID" value="CBF80648"/>
    <property type="gene ID" value="ANIA_08485"/>
</dbReference>
<dbReference type="KEGG" id="ani:ANIA_08485"/>
<dbReference type="VEuPathDB" id="FungiDB:AN8485"/>
<dbReference type="eggNOG" id="KOG4020">
    <property type="taxonomic scope" value="Eukaryota"/>
</dbReference>
<dbReference type="HOGENOM" id="CLU_067152_1_0_1"/>
<dbReference type="InParanoid" id="Q5AT95"/>
<dbReference type="OMA" id="DFVMPVT"/>
<dbReference type="OrthoDB" id="311633at2759"/>
<dbReference type="Proteomes" id="UP000000560">
    <property type="component" value="Chromosome V"/>
</dbReference>
<dbReference type="GO" id="GO:0005737">
    <property type="term" value="C:cytoplasm"/>
    <property type="evidence" value="ECO:0000318"/>
    <property type="project" value="GO_Central"/>
</dbReference>
<dbReference type="GO" id="GO:0005758">
    <property type="term" value="C:mitochondrial intermembrane space"/>
    <property type="evidence" value="ECO:0007669"/>
    <property type="project" value="UniProtKB-SubCell"/>
</dbReference>
<dbReference type="GO" id="GO:0051537">
    <property type="term" value="F:2 iron, 2 sulfur cluster binding"/>
    <property type="evidence" value="ECO:0007669"/>
    <property type="project" value="UniProtKB-UniRule"/>
</dbReference>
<dbReference type="GO" id="GO:0051539">
    <property type="term" value="F:4 iron, 4 sulfur cluster binding"/>
    <property type="evidence" value="ECO:0007669"/>
    <property type="project" value="UniProtKB-KW"/>
</dbReference>
<dbReference type="GO" id="GO:0009055">
    <property type="term" value="F:electron transfer activity"/>
    <property type="evidence" value="ECO:0007669"/>
    <property type="project" value="UniProtKB-UniRule"/>
</dbReference>
<dbReference type="GO" id="GO:0046872">
    <property type="term" value="F:metal ion binding"/>
    <property type="evidence" value="ECO:0007669"/>
    <property type="project" value="UniProtKB-KW"/>
</dbReference>
<dbReference type="GO" id="GO:0016226">
    <property type="term" value="P:iron-sulfur cluster assembly"/>
    <property type="evidence" value="ECO:0000318"/>
    <property type="project" value="GO_Central"/>
</dbReference>
<dbReference type="Gene3D" id="3.40.50.11000">
    <property type="entry name" value="Fe-S cluster assembly protein Dre2, N-terminal domain"/>
    <property type="match status" value="1"/>
</dbReference>
<dbReference type="HAMAP" id="MF_03115">
    <property type="entry name" value="Anamorsin"/>
    <property type="match status" value="1"/>
</dbReference>
<dbReference type="InterPro" id="IPR007785">
    <property type="entry name" value="Anamorsin"/>
</dbReference>
<dbReference type="InterPro" id="IPR046408">
    <property type="entry name" value="CIAPIN1"/>
</dbReference>
<dbReference type="InterPro" id="IPR031838">
    <property type="entry name" value="Dre2_N"/>
</dbReference>
<dbReference type="PANTHER" id="PTHR13273">
    <property type="entry name" value="ANAMORSIN"/>
    <property type="match status" value="1"/>
</dbReference>
<dbReference type="PANTHER" id="PTHR13273:SF14">
    <property type="entry name" value="ANAMORSIN"/>
    <property type="match status" value="1"/>
</dbReference>
<dbReference type="Pfam" id="PF05093">
    <property type="entry name" value="CIAPIN1"/>
    <property type="match status" value="1"/>
</dbReference>
<dbReference type="Pfam" id="PF16803">
    <property type="entry name" value="DRE2_N"/>
    <property type="match status" value="1"/>
</dbReference>
<sequence length="310" mass="33420">MAPSFVSIDTTPDFDMTPTSSKSADSGKRTLLLAPPSIATQEDKLRTLFTTYDRSTTDLQMLDRVSAGFVSLPANTYDLVLVLTGTDGTRRSEALQLLKREVYAAVVPAMKGGAKLQTEDNFFGEAEDREAVLAGLVKKETGFEKMDVGNGAAVPLRLGRKKKAAPAPAPVVQPPPIISSDDNDLNDDELIDEDTLLSADDLKRPIVPPPECQPKAGKRRRACKDCTCGLAAQIEAEDRERREAADKSLNVMKLESDDLNELDFTVQGKTGSCGNCALGDAFRCDGCPFIGLPAFKPGQEVQILNDVAQL</sequence>
<comment type="function">
    <text evidence="1">Component of the cytosolic iron-sulfur (Fe-S) protein assembly (CIA) machinery required for the maturation of extramitochondrial Fe-S proteins. Part of an electron transfer chain functioning in an early step of cytosolic Fe-S biogenesis, facilitating the de novo assembly of a [4Fe-4S] cluster on the scaffold complex cfd1-nbp35. Electrons are transferred to dre2 from NADPH via the FAD- and FMN-containing protein tah18. Tah18-dre2 are also required for the assembly of the diferric tyrosyl radical cofactor of ribonucleotide reductase (RNR), probably by providing electrons for reduction during radical cofactor maturation in the catalytic small subunit rnr2.</text>
</comment>
<comment type="cofactor">
    <cofactor evidence="1">
        <name>[2Fe-2S] cluster</name>
        <dbReference type="ChEBI" id="CHEBI:190135"/>
    </cofactor>
</comment>
<comment type="cofactor">
    <cofactor evidence="1">
        <name>[4Fe-4S] cluster</name>
        <dbReference type="ChEBI" id="CHEBI:49883"/>
    </cofactor>
</comment>
<comment type="subunit">
    <text evidence="1">Monomer. Interacts with tah18. Interacts with mia40.</text>
</comment>
<comment type="subcellular location">
    <subcellularLocation>
        <location evidence="1">Cytoplasm</location>
    </subcellularLocation>
    <subcellularLocation>
        <location evidence="1">Mitochondrion intermembrane space</location>
    </subcellularLocation>
</comment>
<comment type="domain">
    <text evidence="1">The C-terminal domain binds 2 Fe-S clusters but is otherwise mostly in an intrinsically disordered conformation.</text>
</comment>
<comment type="domain">
    <text evidence="1">The N-terminal domain has structural similarity with S-adenosyl-L-methionine-dependent methyltransferases, but does not bind S-adenosyl-L-methionine. It is required for correct assembly of the 2 Fe-S clusters.</text>
</comment>
<comment type="domain">
    <text evidence="1">The twin Cx2C motifs are involved in the recognition by the mitochondrial mia40-erv1 disulfide relay system. The formation of 2 disulfide bonds in the Cx2C motifs through dithiol/disulfide exchange reactions effectively traps the protein in the mitochondrial intermembrane space.</text>
</comment>
<comment type="similarity">
    <text evidence="1">Belongs to the anamorsin family.</text>
</comment>
<organism>
    <name type="scientific">Emericella nidulans (strain FGSC A4 / ATCC 38163 / CBS 112.46 / NRRL 194 / M139)</name>
    <name type="common">Aspergillus nidulans</name>
    <dbReference type="NCBI Taxonomy" id="227321"/>
    <lineage>
        <taxon>Eukaryota</taxon>
        <taxon>Fungi</taxon>
        <taxon>Dikarya</taxon>
        <taxon>Ascomycota</taxon>
        <taxon>Pezizomycotina</taxon>
        <taxon>Eurotiomycetes</taxon>
        <taxon>Eurotiomycetidae</taxon>
        <taxon>Eurotiales</taxon>
        <taxon>Aspergillaceae</taxon>
        <taxon>Aspergillus</taxon>
        <taxon>Aspergillus subgen. Nidulantes</taxon>
    </lineage>
</organism>
<accession>Q5AT95</accession>
<accession>C8VEJ9</accession>